<dbReference type="EMBL" id="AE014184">
    <property type="protein sequence ID" value="AAO44569.1"/>
    <property type="molecule type" value="Genomic_DNA"/>
</dbReference>
<dbReference type="RefSeq" id="WP_011102594.1">
    <property type="nucleotide sequence ID" value="NC_004572.3"/>
</dbReference>
<dbReference type="SMR" id="Q83G56"/>
<dbReference type="STRING" id="203267.TWT_472"/>
<dbReference type="KEGG" id="twh:TWT_472"/>
<dbReference type="eggNOG" id="COG0211">
    <property type="taxonomic scope" value="Bacteria"/>
</dbReference>
<dbReference type="HOGENOM" id="CLU_095424_4_0_11"/>
<dbReference type="OrthoDB" id="9803474at2"/>
<dbReference type="Proteomes" id="UP000002200">
    <property type="component" value="Chromosome"/>
</dbReference>
<dbReference type="GO" id="GO:0022625">
    <property type="term" value="C:cytosolic large ribosomal subunit"/>
    <property type="evidence" value="ECO:0007669"/>
    <property type="project" value="TreeGrafter"/>
</dbReference>
<dbReference type="GO" id="GO:0003735">
    <property type="term" value="F:structural constituent of ribosome"/>
    <property type="evidence" value="ECO:0007669"/>
    <property type="project" value="InterPro"/>
</dbReference>
<dbReference type="GO" id="GO:0006412">
    <property type="term" value="P:translation"/>
    <property type="evidence" value="ECO:0007669"/>
    <property type="project" value="UniProtKB-UniRule"/>
</dbReference>
<dbReference type="FunFam" id="2.40.50.100:FF:000020">
    <property type="entry name" value="50S ribosomal protein L27"/>
    <property type="match status" value="1"/>
</dbReference>
<dbReference type="Gene3D" id="2.40.50.100">
    <property type="match status" value="1"/>
</dbReference>
<dbReference type="HAMAP" id="MF_00539">
    <property type="entry name" value="Ribosomal_bL27"/>
    <property type="match status" value="1"/>
</dbReference>
<dbReference type="InterPro" id="IPR001684">
    <property type="entry name" value="Ribosomal_bL27"/>
</dbReference>
<dbReference type="InterPro" id="IPR018261">
    <property type="entry name" value="Ribosomal_bL27_CS"/>
</dbReference>
<dbReference type="NCBIfam" id="TIGR00062">
    <property type="entry name" value="L27"/>
    <property type="match status" value="1"/>
</dbReference>
<dbReference type="PANTHER" id="PTHR15893:SF0">
    <property type="entry name" value="LARGE RIBOSOMAL SUBUNIT PROTEIN BL27M"/>
    <property type="match status" value="1"/>
</dbReference>
<dbReference type="PANTHER" id="PTHR15893">
    <property type="entry name" value="RIBOSOMAL PROTEIN L27"/>
    <property type="match status" value="1"/>
</dbReference>
<dbReference type="Pfam" id="PF01016">
    <property type="entry name" value="Ribosomal_L27"/>
    <property type="match status" value="1"/>
</dbReference>
<dbReference type="PRINTS" id="PR00063">
    <property type="entry name" value="RIBOSOMALL27"/>
</dbReference>
<dbReference type="SUPFAM" id="SSF110324">
    <property type="entry name" value="Ribosomal L27 protein-like"/>
    <property type="match status" value="1"/>
</dbReference>
<dbReference type="PROSITE" id="PS00831">
    <property type="entry name" value="RIBOSOMAL_L27"/>
    <property type="match status" value="1"/>
</dbReference>
<protein>
    <recommendedName>
        <fullName evidence="1">Large ribosomal subunit protein bL27</fullName>
    </recommendedName>
    <alternativeName>
        <fullName evidence="3">50S ribosomal protein L27</fullName>
    </alternativeName>
</protein>
<accession>Q83G56</accession>
<sequence>MAHKKGASSSRNGRDSNAKRLGVKRFAGQVVSAGEILVRQRGTRFHPGTNVRRGDDDTLFALASGRVRFGRSGKRRAVSVDT</sequence>
<proteinExistence type="inferred from homology"/>
<name>RL27_TROWT</name>
<evidence type="ECO:0000255" key="1">
    <source>
        <dbReference type="HAMAP-Rule" id="MF_00539"/>
    </source>
</evidence>
<evidence type="ECO:0000256" key="2">
    <source>
        <dbReference type="SAM" id="MobiDB-lite"/>
    </source>
</evidence>
<evidence type="ECO:0000305" key="3"/>
<gene>
    <name evidence="1" type="primary">rpmA</name>
    <name type="ordered locus">TWT_472</name>
</gene>
<keyword id="KW-1185">Reference proteome</keyword>
<keyword id="KW-0687">Ribonucleoprotein</keyword>
<keyword id="KW-0689">Ribosomal protein</keyword>
<feature type="chain" id="PRO_0000181199" description="Large ribosomal subunit protein bL27">
    <location>
        <begin position="1"/>
        <end position="82"/>
    </location>
</feature>
<feature type="region of interest" description="Disordered" evidence="2">
    <location>
        <begin position="1"/>
        <end position="21"/>
    </location>
</feature>
<comment type="similarity">
    <text evidence="1">Belongs to the bacterial ribosomal protein bL27 family.</text>
</comment>
<reference key="1">
    <citation type="journal article" date="2003" name="Genome Res.">
        <title>Tropheryma whipplei twist: a human pathogenic Actinobacteria with a reduced genome.</title>
        <authorList>
            <person name="Raoult D."/>
            <person name="Ogata H."/>
            <person name="Audic S."/>
            <person name="Robert C."/>
            <person name="Suhre K."/>
            <person name="Drancourt M."/>
            <person name="Claverie J.-M."/>
        </authorList>
    </citation>
    <scope>NUCLEOTIDE SEQUENCE [LARGE SCALE GENOMIC DNA]</scope>
    <source>
        <strain>Twist</strain>
    </source>
</reference>
<organism>
    <name type="scientific">Tropheryma whipplei (strain Twist)</name>
    <name type="common">Whipple's bacillus</name>
    <dbReference type="NCBI Taxonomy" id="203267"/>
    <lineage>
        <taxon>Bacteria</taxon>
        <taxon>Bacillati</taxon>
        <taxon>Actinomycetota</taxon>
        <taxon>Actinomycetes</taxon>
        <taxon>Micrococcales</taxon>
        <taxon>Tropherymataceae</taxon>
        <taxon>Tropheryma</taxon>
    </lineage>
</organism>